<comment type="function">
    <text evidence="1">Component of the ribosome, a large ribonucleoprotein complex responsible for the synthesis of proteins in the cell. The small ribosomal subunit (SSU) binds messenger RNAs (mRNAs) and translates the encoded message by selecting cognate aminoacyl-transfer RNA (tRNA) molecules. The large subunit (LSU) contains the ribosomal catalytic site termed the peptidyl transferase center (PTC), which catalyzes the formation of peptide bonds, thereby polymerizing the amino acids delivered by tRNAs into a polypeptide chain. The nascent polypeptides leave the ribosome through a tunnel in the LSU and interact with protein factors that function in enzymatic processing, targeting, and the membrane insertion of nascent chains at the exit of the ribosomal tunnel.</text>
</comment>
<comment type="subunit">
    <text evidence="1 5">Component of the large ribosomal subunit (LSU) (Probable). Mature yeast ribosomes consist of a small (40S) and a large (60S) subunit. The 40S small subunit contains 1 molecule of ribosomal RNA (18S rRNA) and at least 33 different proteins. The large 60S subunit contains 3 rRNA molecules (25S, 5.8S and 5S rRNA) and at least 46 different proteins.</text>
</comment>
<comment type="subcellular location">
    <subcellularLocation>
        <location evidence="3">Cytoplasm</location>
    </subcellularLocation>
    <subcellularLocation>
        <location evidence="3">Nucleus</location>
    </subcellularLocation>
</comment>
<comment type="miscellaneous">
    <text>There are 2 genes for this protein in S.pombe.</text>
</comment>
<comment type="miscellaneous">
    <text evidence="5">Initially thought to be part of the large ribosomal subunit. Crystal structures show eS32/eL41 to be a small ribosomal subunit forming a bridge at the interface of the 2 subunits.</text>
</comment>
<comment type="similarity">
    <text evidence="4">Belongs to the eukaryotic ribosomal protein eS32 family.</text>
</comment>
<reference key="1">
    <citation type="journal article" date="2002" name="Nature">
        <title>The genome sequence of Schizosaccharomyces pombe.</title>
        <authorList>
            <person name="Wood V."/>
            <person name="Gwilliam R."/>
            <person name="Rajandream M.A."/>
            <person name="Lyne M.H."/>
            <person name="Lyne R."/>
            <person name="Stewart A."/>
            <person name="Sgouros J.G."/>
            <person name="Peat N."/>
            <person name="Hayles J."/>
            <person name="Baker S.G."/>
            <person name="Basham D."/>
            <person name="Bowman S."/>
            <person name="Brooks K."/>
            <person name="Brown D."/>
            <person name="Brown S."/>
            <person name="Chillingworth T."/>
            <person name="Churcher C.M."/>
            <person name="Collins M."/>
            <person name="Connor R."/>
            <person name="Cronin A."/>
            <person name="Davis P."/>
            <person name="Feltwell T."/>
            <person name="Fraser A."/>
            <person name="Gentles S."/>
            <person name="Goble A."/>
            <person name="Hamlin N."/>
            <person name="Harris D.E."/>
            <person name="Hidalgo J."/>
            <person name="Hodgson G."/>
            <person name="Holroyd S."/>
            <person name="Hornsby T."/>
            <person name="Howarth S."/>
            <person name="Huckle E.J."/>
            <person name="Hunt S."/>
            <person name="Jagels K."/>
            <person name="James K.D."/>
            <person name="Jones L."/>
            <person name="Jones M."/>
            <person name="Leather S."/>
            <person name="McDonald S."/>
            <person name="McLean J."/>
            <person name="Mooney P."/>
            <person name="Moule S."/>
            <person name="Mungall K.L."/>
            <person name="Murphy L.D."/>
            <person name="Niblett D."/>
            <person name="Odell C."/>
            <person name="Oliver K."/>
            <person name="O'Neil S."/>
            <person name="Pearson D."/>
            <person name="Quail M.A."/>
            <person name="Rabbinowitsch E."/>
            <person name="Rutherford K.M."/>
            <person name="Rutter S."/>
            <person name="Saunders D."/>
            <person name="Seeger K."/>
            <person name="Sharp S."/>
            <person name="Skelton J."/>
            <person name="Simmonds M.N."/>
            <person name="Squares R."/>
            <person name="Squares S."/>
            <person name="Stevens K."/>
            <person name="Taylor K."/>
            <person name="Taylor R.G."/>
            <person name="Tivey A."/>
            <person name="Walsh S.V."/>
            <person name="Warren T."/>
            <person name="Whitehead S."/>
            <person name="Woodward J.R."/>
            <person name="Volckaert G."/>
            <person name="Aert R."/>
            <person name="Robben J."/>
            <person name="Grymonprez B."/>
            <person name="Weltjens I."/>
            <person name="Vanstreels E."/>
            <person name="Rieger M."/>
            <person name="Schaefer M."/>
            <person name="Mueller-Auer S."/>
            <person name="Gabel C."/>
            <person name="Fuchs M."/>
            <person name="Duesterhoeft A."/>
            <person name="Fritzc C."/>
            <person name="Holzer E."/>
            <person name="Moestl D."/>
            <person name="Hilbert H."/>
            <person name="Borzym K."/>
            <person name="Langer I."/>
            <person name="Beck A."/>
            <person name="Lehrach H."/>
            <person name="Reinhardt R."/>
            <person name="Pohl T.M."/>
            <person name="Eger P."/>
            <person name="Zimmermann W."/>
            <person name="Wedler H."/>
            <person name="Wambutt R."/>
            <person name="Purnelle B."/>
            <person name="Goffeau A."/>
            <person name="Cadieu E."/>
            <person name="Dreano S."/>
            <person name="Gloux S."/>
            <person name="Lelaure V."/>
            <person name="Mottier S."/>
            <person name="Galibert F."/>
            <person name="Aves S.J."/>
            <person name="Xiang Z."/>
            <person name="Hunt C."/>
            <person name="Moore K."/>
            <person name="Hurst S.M."/>
            <person name="Lucas M."/>
            <person name="Rochet M."/>
            <person name="Gaillardin C."/>
            <person name="Tallada V.A."/>
            <person name="Garzon A."/>
            <person name="Thode G."/>
            <person name="Daga R.R."/>
            <person name="Cruzado L."/>
            <person name="Jimenez J."/>
            <person name="Sanchez M."/>
            <person name="del Rey F."/>
            <person name="Benito J."/>
            <person name="Dominguez A."/>
            <person name="Revuelta J.L."/>
            <person name="Moreno S."/>
            <person name="Armstrong J."/>
            <person name="Forsburg S.L."/>
            <person name="Cerutti L."/>
            <person name="Lowe T."/>
            <person name="McCombie W.R."/>
            <person name="Paulsen I."/>
            <person name="Potashkin J."/>
            <person name="Shpakovski G.V."/>
            <person name="Ussery D."/>
            <person name="Barrell B.G."/>
            <person name="Nurse P."/>
        </authorList>
    </citation>
    <scope>NUCLEOTIDE SEQUENCE [LARGE SCALE GENOMIC DNA]</scope>
    <source>
        <strain>972 / ATCC 24843</strain>
    </source>
</reference>
<reference key="2">
    <citation type="journal article" date="2006" name="Nat. Biotechnol.">
        <title>ORFeome cloning and global analysis of protein localization in the fission yeast Schizosaccharomyces pombe.</title>
        <authorList>
            <person name="Matsuyama A."/>
            <person name="Arai R."/>
            <person name="Yashiroda Y."/>
            <person name="Shirai A."/>
            <person name="Kamata A."/>
            <person name="Sekido S."/>
            <person name="Kobayashi Y."/>
            <person name="Hashimoto A."/>
            <person name="Hamamoto M."/>
            <person name="Hiraoka Y."/>
            <person name="Horinouchi S."/>
            <person name="Yoshida M."/>
        </authorList>
    </citation>
    <scope>SUBCELLULAR LOCATION [LARGE SCALE ANALYSIS]</scope>
</reference>
<reference key="3">
    <citation type="unpublished observations" date="2023-10">
        <authorList>
            <person name="Leibundgut M.A."/>
            <person name="Ban N."/>
        </authorList>
    </citation>
    <scope>REVISION OF SUBUNIT</scope>
    <scope>NOMENCLATURE</scope>
</reference>
<gene>
    <name type="primary">rpl4101</name>
    <name type="synonym">rpl41a</name>
    <name type="ORF">SPAC3G6.13c</name>
</gene>
<proteinExistence type="evidence at protein level"/>
<sequence>MRDKWRKKRVRRLKRKRRKMRARSK</sequence>
<evidence type="ECO:0000250" key="1">
    <source>
        <dbReference type="UniProtKB" id="P0CX86"/>
    </source>
</evidence>
<evidence type="ECO:0000256" key="2">
    <source>
        <dbReference type="SAM" id="MobiDB-lite"/>
    </source>
</evidence>
<evidence type="ECO:0000269" key="3">
    <source>
    </source>
</evidence>
<evidence type="ECO:0000305" key="4"/>
<evidence type="ECO:0000305" key="5">
    <source ref="3"/>
</evidence>
<protein>
    <recommendedName>
        <fullName evidence="5">Small ribosomal subunit protein eS32A</fullName>
    </recommendedName>
    <alternativeName>
        <fullName>60S ribosomal protein L41-A</fullName>
    </alternativeName>
    <alternativeName>
        <fullName evidence="4">Large ribosomal subunit protein eL41A</fullName>
    </alternativeName>
</protein>
<name>RS32A_SCHPO</name>
<organism>
    <name type="scientific">Schizosaccharomyces pombe (strain 972 / ATCC 24843)</name>
    <name type="common">Fission yeast</name>
    <dbReference type="NCBI Taxonomy" id="284812"/>
    <lineage>
        <taxon>Eukaryota</taxon>
        <taxon>Fungi</taxon>
        <taxon>Dikarya</taxon>
        <taxon>Ascomycota</taxon>
        <taxon>Taphrinomycotina</taxon>
        <taxon>Schizosaccharomycetes</taxon>
        <taxon>Schizosaccharomycetales</taxon>
        <taxon>Schizosaccharomycetaceae</taxon>
        <taxon>Schizosaccharomyces</taxon>
    </lineage>
</organism>
<keyword id="KW-0963">Cytoplasm</keyword>
<keyword id="KW-0539">Nucleus</keyword>
<keyword id="KW-1185">Reference proteome</keyword>
<keyword id="KW-0687">Ribonucleoprotein</keyword>
<keyword id="KW-0689">Ribosomal protein</keyword>
<feature type="chain" id="PRO_0000198073" description="Small ribosomal subunit protein eS32A">
    <location>
        <begin position="1"/>
        <end position="25"/>
    </location>
</feature>
<feature type="region of interest" description="Disordered" evidence="2">
    <location>
        <begin position="1"/>
        <end position="25"/>
    </location>
</feature>
<dbReference type="EMBL" id="CU329670">
    <property type="protein sequence ID" value="CAB40152.1"/>
    <property type="molecule type" value="Genomic_DNA"/>
</dbReference>
<dbReference type="PIR" id="T38719">
    <property type="entry name" value="T38719"/>
</dbReference>
<dbReference type="RefSeq" id="NP_594978.1">
    <property type="nucleotide sequence ID" value="NM_001020409.2"/>
</dbReference>
<dbReference type="SMR" id="P0CT81"/>
<dbReference type="FunCoup" id="P0CT81">
    <property type="interactions" value="191"/>
</dbReference>
<dbReference type="STRING" id="284812.P0CT81"/>
<dbReference type="iPTMnet" id="P0CT81"/>
<dbReference type="PaxDb" id="4896-SPAC3F10.18c.1"/>
<dbReference type="EnsemblFungi" id="SPAC3F10.18c.1">
    <property type="protein sequence ID" value="SPAC3F10.18c.1:pep"/>
    <property type="gene ID" value="SPAC3F10.18c"/>
</dbReference>
<dbReference type="EnsemblFungi" id="SPAC3G6.13c.1">
    <property type="protein sequence ID" value="SPAC3G6.13c.1:pep"/>
    <property type="gene ID" value="SPAC3G6.13c"/>
</dbReference>
<dbReference type="GeneID" id="2542213"/>
<dbReference type="KEGG" id="spo:2542213"/>
<dbReference type="KEGG" id="spo:2543180"/>
<dbReference type="PomBase" id="SPAC3G6.13c">
    <property type="gene designation" value="rpl4101"/>
</dbReference>
<dbReference type="VEuPathDB" id="FungiDB:SPAC3F10.18c"/>
<dbReference type="VEuPathDB" id="FungiDB:SPAC3G6.13c"/>
<dbReference type="InParanoid" id="P0CT81"/>
<dbReference type="PRO" id="PR:P0CT81"/>
<dbReference type="Proteomes" id="UP000002485">
    <property type="component" value="Chromosome I"/>
</dbReference>
<dbReference type="GO" id="GO:0005829">
    <property type="term" value="C:cytosol"/>
    <property type="evidence" value="ECO:0007005"/>
    <property type="project" value="PomBase"/>
</dbReference>
<dbReference type="GO" id="GO:0022625">
    <property type="term" value="C:cytosolic large ribosomal subunit"/>
    <property type="evidence" value="ECO:0000266"/>
    <property type="project" value="PomBase"/>
</dbReference>
<dbReference type="GO" id="GO:0005634">
    <property type="term" value="C:nucleus"/>
    <property type="evidence" value="ECO:0007005"/>
    <property type="project" value="PomBase"/>
</dbReference>
<dbReference type="GO" id="GO:0003735">
    <property type="term" value="F:structural constituent of ribosome"/>
    <property type="evidence" value="ECO:0000266"/>
    <property type="project" value="PomBase"/>
</dbReference>
<dbReference type="GO" id="GO:0002181">
    <property type="term" value="P:cytoplasmic translation"/>
    <property type="evidence" value="ECO:0000266"/>
    <property type="project" value="PomBase"/>
</dbReference>
<dbReference type="InterPro" id="IPR007836">
    <property type="entry name" value="Ribosomal_eS32"/>
</dbReference>
<dbReference type="Pfam" id="PF05162">
    <property type="entry name" value="Ribosomal_L41"/>
    <property type="match status" value="1"/>
</dbReference>
<accession>P0CT81</accession>
<accession>Q9Y710</accession>